<name>RL2_THIDA</name>
<organism>
    <name type="scientific">Thiobacillus denitrificans (strain ATCC 25259 / T1)</name>
    <dbReference type="NCBI Taxonomy" id="292415"/>
    <lineage>
        <taxon>Bacteria</taxon>
        <taxon>Pseudomonadati</taxon>
        <taxon>Pseudomonadota</taxon>
        <taxon>Betaproteobacteria</taxon>
        <taxon>Nitrosomonadales</taxon>
        <taxon>Thiobacillaceae</taxon>
        <taxon>Thiobacillus</taxon>
    </lineage>
</organism>
<protein>
    <recommendedName>
        <fullName evidence="1">Large ribosomal subunit protein uL2</fullName>
    </recommendedName>
    <alternativeName>
        <fullName evidence="3">50S ribosomal protein L2</fullName>
    </alternativeName>
</protein>
<dbReference type="EMBL" id="CP000116">
    <property type="protein sequence ID" value="AAZ96361.1"/>
    <property type="molecule type" value="Genomic_DNA"/>
</dbReference>
<dbReference type="RefSeq" id="WP_011310920.1">
    <property type="nucleotide sequence ID" value="NC_007404.1"/>
</dbReference>
<dbReference type="SMR" id="Q3SLP6"/>
<dbReference type="STRING" id="292415.Tbd_0408"/>
<dbReference type="KEGG" id="tbd:Tbd_0408"/>
<dbReference type="eggNOG" id="COG0090">
    <property type="taxonomic scope" value="Bacteria"/>
</dbReference>
<dbReference type="HOGENOM" id="CLU_036235_2_1_4"/>
<dbReference type="OrthoDB" id="9778722at2"/>
<dbReference type="Proteomes" id="UP000008291">
    <property type="component" value="Chromosome"/>
</dbReference>
<dbReference type="GO" id="GO:0015934">
    <property type="term" value="C:large ribosomal subunit"/>
    <property type="evidence" value="ECO:0007669"/>
    <property type="project" value="InterPro"/>
</dbReference>
<dbReference type="GO" id="GO:0019843">
    <property type="term" value="F:rRNA binding"/>
    <property type="evidence" value="ECO:0007669"/>
    <property type="project" value="UniProtKB-UniRule"/>
</dbReference>
<dbReference type="GO" id="GO:0003735">
    <property type="term" value="F:structural constituent of ribosome"/>
    <property type="evidence" value="ECO:0007669"/>
    <property type="project" value="InterPro"/>
</dbReference>
<dbReference type="GO" id="GO:0016740">
    <property type="term" value="F:transferase activity"/>
    <property type="evidence" value="ECO:0007669"/>
    <property type="project" value="InterPro"/>
</dbReference>
<dbReference type="GO" id="GO:0002181">
    <property type="term" value="P:cytoplasmic translation"/>
    <property type="evidence" value="ECO:0007669"/>
    <property type="project" value="TreeGrafter"/>
</dbReference>
<dbReference type="FunFam" id="2.30.30.30:FF:000001">
    <property type="entry name" value="50S ribosomal protein L2"/>
    <property type="match status" value="1"/>
</dbReference>
<dbReference type="FunFam" id="2.40.50.140:FF:000003">
    <property type="entry name" value="50S ribosomal protein L2"/>
    <property type="match status" value="1"/>
</dbReference>
<dbReference type="FunFam" id="4.10.950.10:FF:000001">
    <property type="entry name" value="50S ribosomal protein L2"/>
    <property type="match status" value="1"/>
</dbReference>
<dbReference type="Gene3D" id="2.30.30.30">
    <property type="match status" value="1"/>
</dbReference>
<dbReference type="Gene3D" id="2.40.50.140">
    <property type="entry name" value="Nucleic acid-binding proteins"/>
    <property type="match status" value="1"/>
</dbReference>
<dbReference type="Gene3D" id="4.10.950.10">
    <property type="entry name" value="Ribosomal protein L2, domain 3"/>
    <property type="match status" value="1"/>
</dbReference>
<dbReference type="HAMAP" id="MF_01320_B">
    <property type="entry name" value="Ribosomal_uL2_B"/>
    <property type="match status" value="1"/>
</dbReference>
<dbReference type="InterPro" id="IPR012340">
    <property type="entry name" value="NA-bd_OB-fold"/>
</dbReference>
<dbReference type="InterPro" id="IPR014722">
    <property type="entry name" value="Rib_uL2_dom2"/>
</dbReference>
<dbReference type="InterPro" id="IPR002171">
    <property type="entry name" value="Ribosomal_uL2"/>
</dbReference>
<dbReference type="InterPro" id="IPR005880">
    <property type="entry name" value="Ribosomal_uL2_bac/org-type"/>
</dbReference>
<dbReference type="InterPro" id="IPR022669">
    <property type="entry name" value="Ribosomal_uL2_C"/>
</dbReference>
<dbReference type="InterPro" id="IPR022671">
    <property type="entry name" value="Ribosomal_uL2_CS"/>
</dbReference>
<dbReference type="InterPro" id="IPR014726">
    <property type="entry name" value="Ribosomal_uL2_dom3"/>
</dbReference>
<dbReference type="InterPro" id="IPR022666">
    <property type="entry name" value="Ribosomal_uL2_RNA-bd_dom"/>
</dbReference>
<dbReference type="InterPro" id="IPR008991">
    <property type="entry name" value="Translation_prot_SH3-like_sf"/>
</dbReference>
<dbReference type="NCBIfam" id="TIGR01171">
    <property type="entry name" value="rplB_bact"/>
    <property type="match status" value="1"/>
</dbReference>
<dbReference type="PANTHER" id="PTHR13691:SF5">
    <property type="entry name" value="LARGE RIBOSOMAL SUBUNIT PROTEIN UL2M"/>
    <property type="match status" value="1"/>
</dbReference>
<dbReference type="PANTHER" id="PTHR13691">
    <property type="entry name" value="RIBOSOMAL PROTEIN L2"/>
    <property type="match status" value="1"/>
</dbReference>
<dbReference type="Pfam" id="PF00181">
    <property type="entry name" value="Ribosomal_L2"/>
    <property type="match status" value="1"/>
</dbReference>
<dbReference type="Pfam" id="PF03947">
    <property type="entry name" value="Ribosomal_L2_C"/>
    <property type="match status" value="1"/>
</dbReference>
<dbReference type="PIRSF" id="PIRSF002158">
    <property type="entry name" value="Ribosomal_L2"/>
    <property type="match status" value="1"/>
</dbReference>
<dbReference type="SMART" id="SM01383">
    <property type="entry name" value="Ribosomal_L2"/>
    <property type="match status" value="1"/>
</dbReference>
<dbReference type="SMART" id="SM01382">
    <property type="entry name" value="Ribosomal_L2_C"/>
    <property type="match status" value="1"/>
</dbReference>
<dbReference type="SUPFAM" id="SSF50249">
    <property type="entry name" value="Nucleic acid-binding proteins"/>
    <property type="match status" value="1"/>
</dbReference>
<dbReference type="SUPFAM" id="SSF50104">
    <property type="entry name" value="Translation proteins SH3-like domain"/>
    <property type="match status" value="1"/>
</dbReference>
<dbReference type="PROSITE" id="PS00467">
    <property type="entry name" value="RIBOSOMAL_L2"/>
    <property type="match status" value="1"/>
</dbReference>
<reference key="1">
    <citation type="journal article" date="2006" name="J. Bacteriol.">
        <title>The genome sequence of the obligately chemolithoautotrophic, facultatively anaerobic bacterium Thiobacillus denitrificans.</title>
        <authorList>
            <person name="Beller H.R."/>
            <person name="Chain P.S."/>
            <person name="Letain T.E."/>
            <person name="Chakicherla A."/>
            <person name="Larimer F.W."/>
            <person name="Richardson P.M."/>
            <person name="Coleman M.A."/>
            <person name="Wood A.P."/>
            <person name="Kelly D.P."/>
        </authorList>
    </citation>
    <scope>NUCLEOTIDE SEQUENCE [LARGE SCALE GENOMIC DNA]</scope>
    <source>
        <strain>ATCC 25259 / T1</strain>
    </source>
</reference>
<comment type="function">
    <text evidence="1">One of the primary rRNA binding proteins. Required for association of the 30S and 50S subunits to form the 70S ribosome, for tRNA binding and peptide bond formation. It has been suggested to have peptidyltransferase activity; this is somewhat controversial. Makes several contacts with the 16S rRNA in the 70S ribosome.</text>
</comment>
<comment type="subunit">
    <text evidence="1">Part of the 50S ribosomal subunit. Forms a bridge to the 30S subunit in the 70S ribosome.</text>
</comment>
<comment type="similarity">
    <text evidence="1">Belongs to the universal ribosomal protein uL2 family.</text>
</comment>
<evidence type="ECO:0000255" key="1">
    <source>
        <dbReference type="HAMAP-Rule" id="MF_01320"/>
    </source>
</evidence>
<evidence type="ECO:0000256" key="2">
    <source>
        <dbReference type="SAM" id="MobiDB-lite"/>
    </source>
</evidence>
<evidence type="ECO:0000305" key="3"/>
<accession>Q3SLP6</accession>
<proteinExistence type="inferred from homology"/>
<keyword id="KW-1185">Reference proteome</keyword>
<keyword id="KW-0687">Ribonucleoprotein</keyword>
<keyword id="KW-0689">Ribosomal protein</keyword>
<keyword id="KW-0694">RNA-binding</keyword>
<keyword id="KW-0699">rRNA-binding</keyword>
<gene>
    <name evidence="1" type="primary">rplB</name>
    <name type="ordered locus">Tbd_0408</name>
</gene>
<feature type="chain" id="PRO_0000237260" description="Large ribosomal subunit protein uL2">
    <location>
        <begin position="1"/>
        <end position="275"/>
    </location>
</feature>
<feature type="region of interest" description="Disordered" evidence="2">
    <location>
        <begin position="36"/>
        <end position="55"/>
    </location>
</feature>
<feature type="region of interest" description="Disordered" evidence="2">
    <location>
        <begin position="223"/>
        <end position="275"/>
    </location>
</feature>
<sequence>MALIKVKPTSAGRRAVVKVVTPGLHKGKPLAALLEPKKRGSGRNNNGHITVRHKGGGHKQHYRVVDFRRNKDGIPAKVERIEYDPNRSAHLALLCYADGERRYIIAPRGIAVGAQLVNGVEAPIKAGNCLPLRSIPVGSTVHCVEMMPGKGAQIARSAGTSVQLLAREGSYAQLRLRSGEIRKVHVDCRATLGECGNEEHSLRSIGKAGASRWRGIRPTVRGVVMNPVDHPHGGGEGRTAAGRHPVSPWGTPTKGYRTRSNKRTSNMIVRRRHAR</sequence>